<proteinExistence type="evidence at transcript level"/>
<accession>Q23579</accession>
<name>HLH10_CAEEL</name>
<protein>
    <recommendedName>
        <fullName evidence="9">Helix-loop-helix protein 10</fullName>
    </recommendedName>
</protein>
<gene>
    <name evidence="9" type="primary">hlh-10</name>
    <name evidence="6" type="synonym">CeABF-1</name>
    <name evidence="9" type="ORF">ZK682.4</name>
</gene>
<feature type="chain" id="PRO_0000452348" description="Helix-loop-helix protein 10">
    <location>
        <begin position="1"/>
        <end position="202"/>
    </location>
</feature>
<feature type="domain" description="bHLH" evidence="1">
    <location>
        <begin position="121"/>
        <end position="172"/>
    </location>
</feature>
<feature type="region of interest" description="Disordered" evidence="2">
    <location>
        <begin position="1"/>
        <end position="26"/>
    </location>
</feature>
<feature type="region of interest" description="Disordered" evidence="2">
    <location>
        <begin position="83"/>
        <end position="112"/>
    </location>
</feature>
<feature type="region of interest" description="Basic motif" evidence="1">
    <location>
        <begin position="121"/>
        <end position="134"/>
    </location>
</feature>
<feature type="region of interest" description="Helix-loop-helix motif" evidence="1">
    <location>
        <begin position="135"/>
        <end position="172"/>
    </location>
</feature>
<feature type="compositionally biased region" description="Polar residues" evidence="2">
    <location>
        <begin position="17"/>
        <end position="26"/>
    </location>
</feature>
<reference evidence="8" key="1">
    <citation type="journal article" date="1998" name="Science">
        <title>Genome sequence of the nematode C. elegans: a platform for investigating biology.</title>
        <authorList>
            <consortium name="The C. elegans sequencing consortium"/>
        </authorList>
    </citation>
    <scope>NUCLEOTIDE SEQUENCE [LARGE SCALE GENOMIC DNA]</scope>
    <source>
        <strain evidence="8">Bristol N2</strain>
    </source>
</reference>
<reference evidence="7" key="2">
    <citation type="journal article" date="2001" name="Nucleic Acids Res.">
        <title>Isolation and characterization of the activated B-cell factor 1 homolog in Caenorhabditis elegans.</title>
        <authorList>
            <person name="Nguyen L."/>
            <person name="Round J."/>
            <person name="O'Connell R."/>
            <person name="Geurts P."/>
            <person name="Funes-Duran M."/>
            <person name="Wong J."/>
            <person name="Jongeward G."/>
            <person name="Vierra C.A."/>
        </authorList>
    </citation>
    <scope>DEVELOPMENTAL STAGE</scope>
</reference>
<reference evidence="7" key="3">
    <citation type="journal article" date="2004" name="Dev. Biol.">
        <title>Identification of C. elegans sensory ray genes using whole-genome expression profiling.</title>
        <authorList>
            <person name="Portman D.S."/>
            <person name="Emmons S.W."/>
        </authorList>
    </citation>
    <scope>TISSUE SPECIFICITY</scope>
</reference>
<reference evidence="7" key="4">
    <citation type="journal article" date="2009" name="Cell">
        <title>A multiparameter network reveals extensive divergence between C. elegans bHLH transcription factors.</title>
        <authorList>
            <person name="Grove C.A."/>
            <person name="De Masi F."/>
            <person name="Barrasa M.I."/>
            <person name="Newburger D.E."/>
            <person name="Alkema M.J."/>
            <person name="Bulyk M.L."/>
            <person name="Walhout A.J.M."/>
        </authorList>
    </citation>
    <scope>FUNCTION</scope>
    <scope>HETERODIMER WITH HLH-2</scope>
    <scope>SUBCELLULAR LOCATION</scope>
    <scope>TISSUE SPECIFICITY</scope>
    <scope>DEVELOPMENTAL STAGE</scope>
</reference>
<dbReference type="EMBL" id="BX284605">
    <property type="protein sequence ID" value="CCD69798.2"/>
    <property type="molecule type" value="Genomic_DNA"/>
</dbReference>
<dbReference type="PIR" id="T29971">
    <property type="entry name" value="T29971"/>
</dbReference>
<dbReference type="RefSeq" id="NP_505401.2">
    <property type="nucleotide sequence ID" value="NM_073000.4"/>
</dbReference>
<dbReference type="SMR" id="Q23579"/>
<dbReference type="FunCoup" id="Q23579">
    <property type="interactions" value="59"/>
</dbReference>
<dbReference type="IntAct" id="Q23579">
    <property type="interactions" value="1"/>
</dbReference>
<dbReference type="STRING" id="6239.ZK682.4.1"/>
<dbReference type="PaxDb" id="6239-ZK682.4"/>
<dbReference type="EnsemblMetazoa" id="ZK682.4.1">
    <property type="protein sequence ID" value="ZK682.4.1"/>
    <property type="gene ID" value="WBGene00001954"/>
</dbReference>
<dbReference type="GeneID" id="191402"/>
<dbReference type="KEGG" id="cel:CELE_ZK682.4"/>
<dbReference type="UCSC" id="ZK682.4">
    <property type="organism name" value="c. elegans"/>
</dbReference>
<dbReference type="AGR" id="WB:WBGene00001954"/>
<dbReference type="CTD" id="191402"/>
<dbReference type="WormBase" id="ZK682.4">
    <property type="protein sequence ID" value="CE47615"/>
    <property type="gene ID" value="WBGene00001954"/>
    <property type="gene designation" value="hlh-10"/>
</dbReference>
<dbReference type="eggNOG" id="KOG4029">
    <property type="taxonomic scope" value="Eukaryota"/>
</dbReference>
<dbReference type="HOGENOM" id="CLU_089752_0_0_1"/>
<dbReference type="InParanoid" id="Q23579"/>
<dbReference type="OMA" id="IDRRMVG"/>
<dbReference type="OrthoDB" id="6106870at2759"/>
<dbReference type="PRO" id="PR:Q23579"/>
<dbReference type="Proteomes" id="UP000001940">
    <property type="component" value="Chromosome V"/>
</dbReference>
<dbReference type="Bgee" id="WBGene00001954">
    <property type="expression patterns" value="Expressed in embryo and 3 other cell types or tissues"/>
</dbReference>
<dbReference type="GO" id="GO:0005737">
    <property type="term" value="C:cytoplasm"/>
    <property type="evidence" value="ECO:0000314"/>
    <property type="project" value="UniProtKB"/>
</dbReference>
<dbReference type="GO" id="GO:0005634">
    <property type="term" value="C:nucleus"/>
    <property type="evidence" value="ECO:0000314"/>
    <property type="project" value="UniProtKB"/>
</dbReference>
<dbReference type="GO" id="GO:0000981">
    <property type="term" value="F:DNA-binding transcription factor activity, RNA polymerase II-specific"/>
    <property type="evidence" value="ECO:0000318"/>
    <property type="project" value="GO_Central"/>
</dbReference>
<dbReference type="GO" id="GO:0046982">
    <property type="term" value="F:protein heterodimerization activity"/>
    <property type="evidence" value="ECO:0000353"/>
    <property type="project" value="UniProtKB"/>
</dbReference>
<dbReference type="GO" id="GO:0000977">
    <property type="term" value="F:RNA polymerase II transcription regulatory region sequence-specific DNA binding"/>
    <property type="evidence" value="ECO:0000318"/>
    <property type="project" value="GO_Central"/>
</dbReference>
<dbReference type="GO" id="GO:0003714">
    <property type="term" value="F:transcription corepressor activity"/>
    <property type="evidence" value="ECO:0000314"/>
    <property type="project" value="UniProtKB"/>
</dbReference>
<dbReference type="GO" id="GO:0032502">
    <property type="term" value="P:developmental process"/>
    <property type="evidence" value="ECO:0000318"/>
    <property type="project" value="GO_Central"/>
</dbReference>
<dbReference type="GO" id="GO:0000122">
    <property type="term" value="P:negative regulation of transcription by RNA polymerase II"/>
    <property type="evidence" value="ECO:0000314"/>
    <property type="project" value="UniProtKB"/>
</dbReference>
<dbReference type="GO" id="GO:0006357">
    <property type="term" value="P:regulation of transcription by RNA polymerase II"/>
    <property type="evidence" value="ECO:0000318"/>
    <property type="project" value="GO_Central"/>
</dbReference>
<dbReference type="Gene3D" id="4.10.280.10">
    <property type="entry name" value="Helix-loop-helix DNA-binding domain"/>
    <property type="match status" value="1"/>
</dbReference>
<dbReference type="InterPro" id="IPR011598">
    <property type="entry name" value="bHLH_dom"/>
</dbReference>
<dbReference type="InterPro" id="IPR050283">
    <property type="entry name" value="E-box_TF_Regulators"/>
</dbReference>
<dbReference type="InterPro" id="IPR036638">
    <property type="entry name" value="HLH_DNA-bd_sf"/>
</dbReference>
<dbReference type="PANTHER" id="PTHR23349">
    <property type="entry name" value="BASIC HELIX-LOOP-HELIX TRANSCRIPTION FACTOR, TWIST"/>
    <property type="match status" value="1"/>
</dbReference>
<dbReference type="PANTHER" id="PTHR23349:SF109">
    <property type="entry name" value="HELIX-LOOP-HELIX PROTEIN 10"/>
    <property type="match status" value="1"/>
</dbReference>
<dbReference type="Pfam" id="PF00010">
    <property type="entry name" value="HLH"/>
    <property type="match status" value="1"/>
</dbReference>
<dbReference type="SMART" id="SM00353">
    <property type="entry name" value="HLH"/>
    <property type="match status" value="1"/>
</dbReference>
<dbReference type="SUPFAM" id="SSF47459">
    <property type="entry name" value="HLH, helix-loop-helix DNA-binding domain"/>
    <property type="match status" value="1"/>
</dbReference>
<dbReference type="PROSITE" id="PS50888">
    <property type="entry name" value="BHLH"/>
    <property type="match status" value="1"/>
</dbReference>
<comment type="function">
    <text evidence="5">Probable transcription factor which binds the E box motif 5'-CA[TC][AG]TG-3'.</text>
</comment>
<comment type="subunit">
    <text evidence="5">Heterodimer with hlh-2.</text>
</comment>
<comment type="subcellular location">
    <subcellularLocation>
        <location evidence="1 5">Nucleus</location>
    </subcellularLocation>
    <subcellularLocation>
        <location evidence="5">Cytoplasm</location>
    </subcellularLocation>
</comment>
<comment type="tissue specificity">
    <text evidence="4 5">Expressed in intestine, neurons in head, body and tail, and in body hypodermis, and vulva (PubMed:19632181). Expressed in neurons in the male-specific genital sensilla (simple sense organs) known as rays (PubMed:15183729).</text>
</comment>
<comment type="developmental stage">
    <text evidence="3 5">Expressed in late embryogenesis, larval stages L2, L3 and L4 and in adults.</text>
</comment>
<keyword id="KW-0963">Cytoplasm</keyword>
<keyword id="KW-0238">DNA-binding</keyword>
<keyword id="KW-0539">Nucleus</keyword>
<keyword id="KW-1185">Reference proteome</keyword>
<keyword id="KW-0804">Transcription</keyword>
<keyword id="KW-0805">Transcription regulation</keyword>
<organism evidence="8">
    <name type="scientific">Caenorhabditis elegans</name>
    <dbReference type="NCBI Taxonomy" id="6239"/>
    <lineage>
        <taxon>Eukaryota</taxon>
        <taxon>Metazoa</taxon>
        <taxon>Ecdysozoa</taxon>
        <taxon>Nematoda</taxon>
        <taxon>Chromadorea</taxon>
        <taxon>Rhabditida</taxon>
        <taxon>Rhabditina</taxon>
        <taxon>Rhabditomorpha</taxon>
        <taxon>Rhabditoidea</taxon>
        <taxon>Rhabditidae</taxon>
        <taxon>Peloderinae</taxon>
        <taxon>Caenorhabditis</taxon>
    </lineage>
</organism>
<sequence>MESSSMTTHQEEPLDLSTGNHGNSELSDEQQIMQVMESCGMFLQQNLFAWFLQSMLEASASQPQLTQDEPPENDTKENDLVKQNKSEVNDENESTPSPTQNSRRRTSTGKIDRRMVGKMCTRRYEANARERNRVQQLSKMFDQLRVCLPIEDDAKISKLATLKVASSYIGYLGAILQENSNDEEEFKKQLQVELECAKTLRK</sequence>
<evidence type="ECO:0000255" key="1">
    <source>
        <dbReference type="PROSITE-ProRule" id="PRU00981"/>
    </source>
</evidence>
<evidence type="ECO:0000256" key="2">
    <source>
        <dbReference type="SAM" id="MobiDB-lite"/>
    </source>
</evidence>
<evidence type="ECO:0000269" key="3">
    <source>
    </source>
</evidence>
<evidence type="ECO:0000269" key="4">
    <source>
    </source>
</evidence>
<evidence type="ECO:0000269" key="5">
    <source>
    </source>
</evidence>
<evidence type="ECO:0000303" key="6">
    <source>
    </source>
</evidence>
<evidence type="ECO:0000305" key="7"/>
<evidence type="ECO:0000312" key="8">
    <source>
        <dbReference type="Proteomes" id="UP000001940"/>
    </source>
</evidence>
<evidence type="ECO:0000312" key="9">
    <source>
        <dbReference type="WormBase" id="ZK682.4"/>
    </source>
</evidence>